<organism>
    <name type="scientific">Escherichia coli (strain SMS-3-5 / SECEC)</name>
    <dbReference type="NCBI Taxonomy" id="439855"/>
    <lineage>
        <taxon>Bacteria</taxon>
        <taxon>Pseudomonadati</taxon>
        <taxon>Pseudomonadota</taxon>
        <taxon>Gammaproteobacteria</taxon>
        <taxon>Enterobacterales</taxon>
        <taxon>Enterobacteriaceae</taxon>
        <taxon>Escherichia</taxon>
    </lineage>
</organism>
<sequence length="574" mass="67127">MPRGLELLIAQTILQGFDAQYGRFLEVTSGAQQRFEQADWHAVQQAMKNRIHLYDHHVGLVVEQLRCITNGQSTDAAFLLRVKEHYTRLLPDYPRFEIAESFFNSVYCRLFDHRSLTPERLFIFSSQPERRFRTIPRPLAKDFHSDHGWESLLMRVISDLPLRLRWQNKSRDIHYIVRHLTETLGTDNLAESHLQVANELFYRNKAAWLVGKLITPSGTLPFLLPIHQTDDGELFIDTCLTTTAEASIVFGFARSYFMVYAPLPAALVEWLREILPGKTTAELYMAIGCQKHAKTESYREYLVYLQGCNEQFIEAPGIRGMVMLVFTLPGFDRVFKVIKDRFAPQKEMSAAHVCACYQLVKEHDRVGRMADTQEFENFVLEKRHISPALMELLLQEAAEKITDLGEQIVIRHLYIERRMVPLNIWLEQVEGQQLRDAIEEYGNAIRQLAAANIFPGDMLFKNFGVTRHGRVVFYDYDEICYMTEVNFRDIPPPRYPEDELASEPWYSVSPGDVFPEEFRHWLCADPRIGPLFEEMHADLFRADYWRALQNRIREGHVEDVYAYRRRQRFSVRFV</sequence>
<dbReference type="EC" id="2.7.11.5" evidence="1"/>
<dbReference type="EC" id="3.1.3.-" evidence="1"/>
<dbReference type="EMBL" id="CP000970">
    <property type="protein sequence ID" value="ACB15824.1"/>
    <property type="molecule type" value="Genomic_DNA"/>
</dbReference>
<dbReference type="RefSeq" id="WP_001137239.1">
    <property type="nucleotide sequence ID" value="NC_010498.1"/>
</dbReference>
<dbReference type="SMR" id="B1LPH3"/>
<dbReference type="KEGG" id="ecm:EcSMS35_4470"/>
<dbReference type="HOGENOM" id="CLU_033804_1_1_6"/>
<dbReference type="Proteomes" id="UP000007011">
    <property type="component" value="Chromosome"/>
</dbReference>
<dbReference type="GO" id="GO:0005737">
    <property type="term" value="C:cytoplasm"/>
    <property type="evidence" value="ECO:0007669"/>
    <property type="project" value="UniProtKB-SubCell"/>
</dbReference>
<dbReference type="GO" id="GO:0008772">
    <property type="term" value="F:[isocitrate dehydrogenase (NADP+)] kinase activity"/>
    <property type="evidence" value="ECO:0007669"/>
    <property type="project" value="UniProtKB-UniRule"/>
</dbReference>
<dbReference type="GO" id="GO:0016208">
    <property type="term" value="F:AMP binding"/>
    <property type="evidence" value="ECO:0007669"/>
    <property type="project" value="TreeGrafter"/>
</dbReference>
<dbReference type="GO" id="GO:0005524">
    <property type="term" value="F:ATP binding"/>
    <property type="evidence" value="ECO:0007669"/>
    <property type="project" value="UniProtKB-UniRule"/>
</dbReference>
<dbReference type="GO" id="GO:0004721">
    <property type="term" value="F:phosphoprotein phosphatase activity"/>
    <property type="evidence" value="ECO:0007669"/>
    <property type="project" value="UniProtKB-KW"/>
</dbReference>
<dbReference type="GO" id="GO:0004674">
    <property type="term" value="F:protein serine/threonine kinase activity"/>
    <property type="evidence" value="ECO:0007669"/>
    <property type="project" value="UniProtKB-KW"/>
</dbReference>
<dbReference type="GO" id="GO:0006006">
    <property type="term" value="P:glucose metabolic process"/>
    <property type="evidence" value="ECO:0007669"/>
    <property type="project" value="InterPro"/>
</dbReference>
<dbReference type="GO" id="GO:0006097">
    <property type="term" value="P:glyoxylate cycle"/>
    <property type="evidence" value="ECO:0007669"/>
    <property type="project" value="UniProtKB-UniRule"/>
</dbReference>
<dbReference type="GO" id="GO:0006099">
    <property type="term" value="P:tricarboxylic acid cycle"/>
    <property type="evidence" value="ECO:0007669"/>
    <property type="project" value="UniProtKB-UniRule"/>
</dbReference>
<dbReference type="HAMAP" id="MF_00747">
    <property type="entry name" value="AceK"/>
    <property type="match status" value="1"/>
</dbReference>
<dbReference type="InterPro" id="IPR046855">
    <property type="entry name" value="AceK_kinase"/>
</dbReference>
<dbReference type="InterPro" id="IPR046854">
    <property type="entry name" value="AceK_regulatory"/>
</dbReference>
<dbReference type="InterPro" id="IPR010452">
    <property type="entry name" value="Isocitrate_DH_AceK"/>
</dbReference>
<dbReference type="NCBIfam" id="NF002804">
    <property type="entry name" value="PRK02946.1"/>
    <property type="match status" value="1"/>
</dbReference>
<dbReference type="PANTHER" id="PTHR39559">
    <property type="match status" value="1"/>
</dbReference>
<dbReference type="PANTHER" id="PTHR39559:SF1">
    <property type="entry name" value="ISOCITRATE DEHYDROGENASE KINASE_PHOSPHATASE"/>
    <property type="match status" value="1"/>
</dbReference>
<dbReference type="Pfam" id="PF06315">
    <property type="entry name" value="AceK_kinase"/>
    <property type="match status" value="1"/>
</dbReference>
<dbReference type="Pfam" id="PF20423">
    <property type="entry name" value="AceK_regulatory"/>
    <property type="match status" value="1"/>
</dbReference>
<dbReference type="PIRSF" id="PIRSF000719">
    <property type="entry name" value="AceK"/>
    <property type="match status" value="1"/>
</dbReference>
<comment type="function">
    <text evidence="1">Bifunctional enzyme which can phosphorylate or dephosphorylate isocitrate dehydrogenase (IDH) on a specific serine residue. This is a regulatory mechanism which enables bacteria to bypass the Krebs cycle via the glyoxylate shunt in response to the source of carbon. When bacteria are grown on glucose, IDH is fully active and unphosphorylated, but when grown on acetate or ethanol, the activity of IDH declines drastically concomitant with its phosphorylation.</text>
</comment>
<comment type="catalytic activity">
    <reaction evidence="1">
        <text>L-seryl-[isocitrate dehydrogenase] + ATP = O-phospho-L-seryl-[isocitrate dehydrogenase] + ADP + H(+)</text>
        <dbReference type="Rhea" id="RHEA:43540"/>
        <dbReference type="Rhea" id="RHEA-COMP:10605"/>
        <dbReference type="Rhea" id="RHEA-COMP:10606"/>
        <dbReference type="ChEBI" id="CHEBI:15378"/>
        <dbReference type="ChEBI" id="CHEBI:29999"/>
        <dbReference type="ChEBI" id="CHEBI:30616"/>
        <dbReference type="ChEBI" id="CHEBI:83421"/>
        <dbReference type="ChEBI" id="CHEBI:456216"/>
        <dbReference type="EC" id="2.7.11.5"/>
    </reaction>
</comment>
<comment type="subcellular location">
    <subcellularLocation>
        <location evidence="1">Cytoplasm</location>
    </subcellularLocation>
</comment>
<comment type="similarity">
    <text evidence="1">Belongs to the AceK family.</text>
</comment>
<evidence type="ECO:0000255" key="1">
    <source>
        <dbReference type="HAMAP-Rule" id="MF_00747"/>
    </source>
</evidence>
<proteinExistence type="inferred from homology"/>
<gene>
    <name evidence="1" type="primary">aceK</name>
    <name type="ordered locus">EcSMS35_4470</name>
</gene>
<accession>B1LPH3</accession>
<feature type="chain" id="PRO_1000133270" description="Isocitrate dehydrogenase kinase/phosphatase">
    <location>
        <begin position="1"/>
        <end position="574"/>
    </location>
</feature>
<feature type="active site" evidence="1">
    <location>
        <position position="371"/>
    </location>
</feature>
<feature type="binding site" evidence="1">
    <location>
        <begin position="315"/>
        <end position="321"/>
    </location>
    <ligand>
        <name>ATP</name>
        <dbReference type="ChEBI" id="CHEBI:30616"/>
    </ligand>
</feature>
<feature type="binding site" evidence="1">
    <location>
        <position position="336"/>
    </location>
    <ligand>
        <name>ATP</name>
        <dbReference type="ChEBI" id="CHEBI:30616"/>
    </ligand>
</feature>
<protein>
    <recommendedName>
        <fullName evidence="1">Isocitrate dehydrogenase kinase/phosphatase</fullName>
        <shortName evidence="1">IDH kinase/phosphatase</shortName>
        <shortName evidence="1">IDHK/P</shortName>
        <ecNumber evidence="1">2.7.11.5</ecNumber>
        <ecNumber evidence="1">3.1.3.-</ecNumber>
    </recommendedName>
</protein>
<reference key="1">
    <citation type="journal article" date="2008" name="J. Bacteriol.">
        <title>Insights into the environmental resistance gene pool from the genome sequence of the multidrug-resistant environmental isolate Escherichia coli SMS-3-5.</title>
        <authorList>
            <person name="Fricke W.F."/>
            <person name="Wright M.S."/>
            <person name="Lindell A.H."/>
            <person name="Harkins D.M."/>
            <person name="Baker-Austin C."/>
            <person name="Ravel J."/>
            <person name="Stepanauskas R."/>
        </authorList>
    </citation>
    <scope>NUCLEOTIDE SEQUENCE [LARGE SCALE GENOMIC DNA]</scope>
    <source>
        <strain>SMS-3-5 / SECEC</strain>
    </source>
</reference>
<keyword id="KW-0067">ATP-binding</keyword>
<keyword id="KW-0963">Cytoplasm</keyword>
<keyword id="KW-0329">Glyoxylate bypass</keyword>
<keyword id="KW-0378">Hydrolase</keyword>
<keyword id="KW-0418">Kinase</keyword>
<keyword id="KW-0547">Nucleotide-binding</keyword>
<keyword id="KW-0904">Protein phosphatase</keyword>
<keyword id="KW-0723">Serine/threonine-protein kinase</keyword>
<keyword id="KW-0808">Transferase</keyword>
<keyword id="KW-0816">Tricarboxylic acid cycle</keyword>
<name>ACEK_ECOSM</name>